<evidence type="ECO:0000256" key="1">
    <source>
        <dbReference type="SAM" id="MobiDB-lite"/>
    </source>
</evidence>
<evidence type="ECO:0000305" key="2"/>
<reference key="1">
    <citation type="journal article" date="2005" name="Proc. Natl. Acad. Sci. U.S.A.">
        <title>Whole genome sequence of Staphylococcus saprophyticus reveals the pathogenesis of uncomplicated urinary tract infection.</title>
        <authorList>
            <person name="Kuroda M."/>
            <person name="Yamashita A."/>
            <person name="Hirakawa H."/>
            <person name="Kumano M."/>
            <person name="Morikawa K."/>
            <person name="Higashide M."/>
            <person name="Maruyama A."/>
            <person name="Inose Y."/>
            <person name="Matoba K."/>
            <person name="Toh H."/>
            <person name="Kuhara S."/>
            <person name="Hattori M."/>
            <person name="Ohta T."/>
        </authorList>
    </citation>
    <scope>NUCLEOTIDE SEQUENCE [LARGE SCALE GENOMIC DNA]</scope>
    <source>
        <strain>ATCC 15305 / DSM 20229 / NCIMB 8711 / NCTC 7292 / S-41</strain>
    </source>
</reference>
<proteinExistence type="inferred from homology"/>
<accession>Q49Y63</accession>
<protein>
    <recommendedName>
        <fullName>UPF0337 protein SSP1134</fullName>
    </recommendedName>
</protein>
<dbReference type="EMBL" id="AP008934">
    <property type="protein sequence ID" value="BAE18279.1"/>
    <property type="molecule type" value="Genomic_DNA"/>
</dbReference>
<dbReference type="RefSeq" id="WP_002483111.1">
    <property type="nucleotide sequence ID" value="NZ_MTGA01000038.1"/>
</dbReference>
<dbReference type="SMR" id="Q49Y63"/>
<dbReference type="KEGG" id="ssp:SSP1134"/>
<dbReference type="eggNOG" id="COG3237">
    <property type="taxonomic scope" value="Bacteria"/>
</dbReference>
<dbReference type="HOGENOM" id="CLU_135567_0_3_9"/>
<dbReference type="OrthoDB" id="2134937at2"/>
<dbReference type="Proteomes" id="UP000006371">
    <property type="component" value="Chromosome"/>
</dbReference>
<dbReference type="Gene3D" id="1.10.1470.10">
    <property type="entry name" value="YjbJ"/>
    <property type="match status" value="1"/>
</dbReference>
<dbReference type="InterPro" id="IPR008462">
    <property type="entry name" value="CsbD"/>
</dbReference>
<dbReference type="InterPro" id="IPR050423">
    <property type="entry name" value="UPF0337_stress_rsp"/>
</dbReference>
<dbReference type="InterPro" id="IPR036629">
    <property type="entry name" value="YjbJ_sf"/>
</dbReference>
<dbReference type="PANTHER" id="PTHR34977">
    <property type="entry name" value="UPF0337 PROTEIN YJBJ"/>
    <property type="match status" value="1"/>
</dbReference>
<dbReference type="PANTHER" id="PTHR34977:SF1">
    <property type="entry name" value="UPF0337 PROTEIN YJBJ"/>
    <property type="match status" value="1"/>
</dbReference>
<dbReference type="Pfam" id="PF05532">
    <property type="entry name" value="CsbD"/>
    <property type="match status" value="1"/>
</dbReference>
<dbReference type="SUPFAM" id="SSF69047">
    <property type="entry name" value="Hypothetical protein YjbJ"/>
    <property type="match status" value="1"/>
</dbReference>
<comment type="similarity">
    <text evidence="2">Belongs to the UPF0337 (CsbD) family.</text>
</comment>
<feature type="chain" id="PRO_0000272683" description="UPF0337 protein SSP1134">
    <location>
        <begin position="1"/>
        <end position="60"/>
    </location>
</feature>
<feature type="region of interest" description="Disordered" evidence="1">
    <location>
        <begin position="1"/>
        <end position="41"/>
    </location>
</feature>
<feature type="compositionally biased region" description="Basic and acidic residues" evidence="1">
    <location>
        <begin position="23"/>
        <end position="41"/>
    </location>
</feature>
<organism>
    <name type="scientific">Staphylococcus saprophyticus subsp. saprophyticus (strain ATCC 15305 / DSM 20229 / NCIMB 8711 / NCTC 7292 / S-41)</name>
    <dbReference type="NCBI Taxonomy" id="342451"/>
    <lineage>
        <taxon>Bacteria</taxon>
        <taxon>Bacillati</taxon>
        <taxon>Bacillota</taxon>
        <taxon>Bacilli</taxon>
        <taxon>Bacillales</taxon>
        <taxon>Staphylococcaceae</taxon>
        <taxon>Staphylococcus</taxon>
    </lineage>
</organism>
<keyword id="KW-1185">Reference proteome</keyword>
<name>Y1134_STAS1</name>
<gene>
    <name type="ordered locus">SSP1134</name>
</gene>
<sequence>MADENKFEQAKGNVKETVGNVTDNKELENEGKEDKTSGKAKEFVENAKDKANEVIDKFKK</sequence>